<keyword id="KW-0150">Chloroplast</keyword>
<keyword id="KW-0934">Plastid</keyword>
<keyword id="KW-0687">Ribonucleoprotein</keyword>
<keyword id="KW-0689">Ribosomal protein</keyword>
<geneLocation type="chloroplast"/>
<comment type="subunit">
    <text evidence="1">Part of the 50S ribosomal subunit.</text>
</comment>
<comment type="subcellular location">
    <subcellularLocation>
        <location>Plastid</location>
        <location>Chloroplast</location>
    </subcellularLocation>
</comment>
<comment type="similarity">
    <text evidence="4">Belongs to the universal ribosomal protein uL2 family.</text>
</comment>
<reference key="1">
    <citation type="submission" date="1997-03" db="EMBL/GenBank/DDBJ databases">
        <authorList>
            <person name="Kluemper S."/>
            <person name="Kanka S."/>
            <person name="Riesner D."/>
            <person name="Etscheid M."/>
        </authorList>
    </citation>
    <scope>NUCLEOTIDE SEQUENCE [GENOMIC DNA]</scope>
</reference>
<proteinExistence type="inferred from homology"/>
<evidence type="ECO:0000250" key="1"/>
<evidence type="ECO:0000255" key="2">
    <source>
        <dbReference type="HAMAP-Rule" id="MF_01320"/>
    </source>
</evidence>
<evidence type="ECO:0000256" key="3">
    <source>
        <dbReference type="SAM" id="MobiDB-lite"/>
    </source>
</evidence>
<evidence type="ECO:0000305" key="4"/>
<protein>
    <recommendedName>
        <fullName evidence="2">Large ribosomal subunit protein uL2c</fullName>
    </recommendedName>
    <alternativeName>
        <fullName evidence="4">50S ribosomal protein L2, chloroplastic</fullName>
    </alternativeName>
</protein>
<feature type="chain" id="PRO_0000129695" description="Large ribosomal subunit protein uL2c">
    <location>
        <begin position="1"/>
        <end position="275"/>
    </location>
</feature>
<feature type="region of interest" description="Disordered" evidence="3">
    <location>
        <begin position="224"/>
        <end position="275"/>
    </location>
</feature>
<gene>
    <name type="primary">rpl2</name>
</gene>
<accession>O62954</accession>
<sequence length="275" mass="30181">MAIRSYRILTPDTRNRSVSGFDGRVQLDPQKKLTSGQHHCGSRNGRGIITARHRGGGHKRLYRQIDFRRDKEHISGKIVTIEYDPNRSAYICKVHYKNGDKMYILHPRGVMIGDTILSGPKAPISIGNALPLTNMPLGTAIHNIEITLGKGGQLARAAGAVAELIAKEDRSATLRLPSGEVRLISENCSATIGQVGNITANNRSFGKAGAKRWLGKRSEVRGVAMNPVDHPHGGGEGRTPIGRKKPVTPWGYSALGKKSRKRNRYSDASILRRRE</sequence>
<name>RK2_PICAB</name>
<organism>
    <name type="scientific">Picea abies</name>
    <name type="common">Norway spruce</name>
    <name type="synonym">Picea excelsa</name>
    <dbReference type="NCBI Taxonomy" id="3329"/>
    <lineage>
        <taxon>Eukaryota</taxon>
        <taxon>Viridiplantae</taxon>
        <taxon>Streptophyta</taxon>
        <taxon>Embryophyta</taxon>
        <taxon>Tracheophyta</taxon>
        <taxon>Spermatophyta</taxon>
        <taxon>Pinopsida</taxon>
        <taxon>Pinidae</taxon>
        <taxon>Conifers I</taxon>
        <taxon>Pinales</taxon>
        <taxon>Pinaceae</taxon>
        <taxon>Picea</taxon>
    </lineage>
</organism>
<dbReference type="EMBL" id="U92462">
    <property type="protein sequence ID" value="AAC95500.1"/>
    <property type="molecule type" value="Genomic_DNA"/>
</dbReference>
<dbReference type="PIR" id="T11810">
    <property type="entry name" value="T11810"/>
</dbReference>
<dbReference type="SMR" id="O62954"/>
<dbReference type="GO" id="GO:0009507">
    <property type="term" value="C:chloroplast"/>
    <property type="evidence" value="ECO:0007669"/>
    <property type="project" value="UniProtKB-SubCell"/>
</dbReference>
<dbReference type="GO" id="GO:0005762">
    <property type="term" value="C:mitochondrial large ribosomal subunit"/>
    <property type="evidence" value="ECO:0007669"/>
    <property type="project" value="TreeGrafter"/>
</dbReference>
<dbReference type="GO" id="GO:0019843">
    <property type="term" value="F:rRNA binding"/>
    <property type="evidence" value="ECO:0007669"/>
    <property type="project" value="UniProtKB-UniRule"/>
</dbReference>
<dbReference type="GO" id="GO:0003735">
    <property type="term" value="F:structural constituent of ribosome"/>
    <property type="evidence" value="ECO:0007669"/>
    <property type="project" value="InterPro"/>
</dbReference>
<dbReference type="GO" id="GO:0016740">
    <property type="term" value="F:transferase activity"/>
    <property type="evidence" value="ECO:0007669"/>
    <property type="project" value="InterPro"/>
</dbReference>
<dbReference type="GO" id="GO:0032543">
    <property type="term" value="P:mitochondrial translation"/>
    <property type="evidence" value="ECO:0007669"/>
    <property type="project" value="TreeGrafter"/>
</dbReference>
<dbReference type="FunFam" id="4.10.950.10:FF:000001">
    <property type="entry name" value="50S ribosomal protein L2"/>
    <property type="match status" value="1"/>
</dbReference>
<dbReference type="FunFam" id="2.30.30.30:FF:000008">
    <property type="entry name" value="50S ribosomal protein L2, chloroplastic"/>
    <property type="match status" value="1"/>
</dbReference>
<dbReference type="Gene3D" id="2.30.30.30">
    <property type="match status" value="1"/>
</dbReference>
<dbReference type="Gene3D" id="2.40.50.140">
    <property type="entry name" value="Nucleic acid-binding proteins"/>
    <property type="match status" value="1"/>
</dbReference>
<dbReference type="Gene3D" id="4.10.950.10">
    <property type="entry name" value="Ribosomal protein L2, domain 3"/>
    <property type="match status" value="1"/>
</dbReference>
<dbReference type="HAMAP" id="MF_01320_B">
    <property type="entry name" value="Ribosomal_uL2_B"/>
    <property type="match status" value="1"/>
</dbReference>
<dbReference type="InterPro" id="IPR012340">
    <property type="entry name" value="NA-bd_OB-fold"/>
</dbReference>
<dbReference type="InterPro" id="IPR014722">
    <property type="entry name" value="Rib_uL2_dom2"/>
</dbReference>
<dbReference type="InterPro" id="IPR002171">
    <property type="entry name" value="Ribosomal_uL2"/>
</dbReference>
<dbReference type="InterPro" id="IPR005880">
    <property type="entry name" value="Ribosomal_uL2_bac/org-type"/>
</dbReference>
<dbReference type="InterPro" id="IPR022669">
    <property type="entry name" value="Ribosomal_uL2_C"/>
</dbReference>
<dbReference type="InterPro" id="IPR014726">
    <property type="entry name" value="Ribosomal_uL2_dom3"/>
</dbReference>
<dbReference type="InterPro" id="IPR022666">
    <property type="entry name" value="Ribosomal_uL2_RNA-bd_dom"/>
</dbReference>
<dbReference type="InterPro" id="IPR008991">
    <property type="entry name" value="Translation_prot_SH3-like_sf"/>
</dbReference>
<dbReference type="NCBIfam" id="TIGR01171">
    <property type="entry name" value="rplB_bact"/>
    <property type="match status" value="1"/>
</dbReference>
<dbReference type="PANTHER" id="PTHR13691:SF5">
    <property type="entry name" value="LARGE RIBOSOMAL SUBUNIT PROTEIN UL2M"/>
    <property type="match status" value="1"/>
</dbReference>
<dbReference type="PANTHER" id="PTHR13691">
    <property type="entry name" value="RIBOSOMAL PROTEIN L2"/>
    <property type="match status" value="1"/>
</dbReference>
<dbReference type="Pfam" id="PF00181">
    <property type="entry name" value="Ribosomal_L2"/>
    <property type="match status" value="1"/>
</dbReference>
<dbReference type="Pfam" id="PF03947">
    <property type="entry name" value="Ribosomal_L2_C"/>
    <property type="match status" value="1"/>
</dbReference>
<dbReference type="PIRSF" id="PIRSF002158">
    <property type="entry name" value="Ribosomal_L2"/>
    <property type="match status" value="1"/>
</dbReference>
<dbReference type="SMART" id="SM01383">
    <property type="entry name" value="Ribosomal_L2"/>
    <property type="match status" value="1"/>
</dbReference>
<dbReference type="SMART" id="SM01382">
    <property type="entry name" value="Ribosomal_L2_C"/>
    <property type="match status" value="1"/>
</dbReference>
<dbReference type="SUPFAM" id="SSF50249">
    <property type="entry name" value="Nucleic acid-binding proteins"/>
    <property type="match status" value="1"/>
</dbReference>
<dbReference type="SUPFAM" id="SSF50104">
    <property type="entry name" value="Translation proteins SH3-like domain"/>
    <property type="match status" value="1"/>
</dbReference>